<proteinExistence type="inferred from homology"/>
<gene>
    <name evidence="1" type="primary">groES</name>
    <name evidence="1" type="synonym">groS</name>
    <name type="synonym">stp11</name>
</gene>
<accession>P16626</accession>
<reference key="1">
    <citation type="journal article" date="1990" name="Infect. Immun.">
        <title>Molecular cloning and sequence analysis of the Sta58 major antigen gene of Rickettsia tsutsugamushi: sequence homology and antigenic comparison of Sta58 to the 60-kilodalton family of stress proteins.</title>
        <authorList>
            <person name="Stover C.K."/>
            <person name="Marana D.P."/>
            <person name="Dasch G.A."/>
            <person name="Oaks E.V."/>
        </authorList>
    </citation>
    <scope>NUCLEOTIDE SEQUENCE [GENOMIC DNA]</scope>
    <source>
        <strain>Karp</strain>
    </source>
</reference>
<feature type="chain" id="PRO_0000174831" description="Co-chaperonin GroES">
    <location>
        <begin position="1"/>
        <end position="94"/>
    </location>
</feature>
<evidence type="ECO:0000255" key="1">
    <source>
        <dbReference type="HAMAP-Rule" id="MF_00580"/>
    </source>
</evidence>
<evidence type="ECO:0000305" key="2"/>
<keyword id="KW-0143">Chaperone</keyword>
<keyword id="KW-0963">Cytoplasm</keyword>
<protein>
    <recommendedName>
        <fullName evidence="1">Co-chaperonin GroES</fullName>
    </recommendedName>
    <alternativeName>
        <fullName evidence="1">10 kDa chaperonin</fullName>
    </alternativeName>
    <alternativeName>
        <fullName evidence="1">Chaperonin-10</fullName>
        <shortName evidence="1">Cpn10</shortName>
    </alternativeName>
    <alternativeName>
        <fullName>Heat shock protein 11</fullName>
    </alternativeName>
</protein>
<name>CH10_ORITS</name>
<dbReference type="EMBL" id="M31887">
    <property type="protein sequence ID" value="AAA26392.1"/>
    <property type="molecule type" value="Genomic_DNA"/>
</dbReference>
<dbReference type="PIR" id="A41492">
    <property type="entry name" value="A41492"/>
</dbReference>
<dbReference type="RefSeq" id="WP_041621221.1">
    <property type="nucleotide sequence ID" value="NZ_LS398552.1"/>
</dbReference>
<dbReference type="SMR" id="P16626"/>
<dbReference type="STRING" id="357244.OTBS_0916"/>
<dbReference type="GO" id="GO:0005737">
    <property type="term" value="C:cytoplasm"/>
    <property type="evidence" value="ECO:0007669"/>
    <property type="project" value="UniProtKB-SubCell"/>
</dbReference>
<dbReference type="GO" id="GO:0005524">
    <property type="term" value="F:ATP binding"/>
    <property type="evidence" value="ECO:0007669"/>
    <property type="project" value="InterPro"/>
</dbReference>
<dbReference type="GO" id="GO:0046872">
    <property type="term" value="F:metal ion binding"/>
    <property type="evidence" value="ECO:0007669"/>
    <property type="project" value="TreeGrafter"/>
</dbReference>
<dbReference type="GO" id="GO:0044183">
    <property type="term" value="F:protein folding chaperone"/>
    <property type="evidence" value="ECO:0007669"/>
    <property type="project" value="InterPro"/>
</dbReference>
<dbReference type="GO" id="GO:0051087">
    <property type="term" value="F:protein-folding chaperone binding"/>
    <property type="evidence" value="ECO:0007669"/>
    <property type="project" value="TreeGrafter"/>
</dbReference>
<dbReference type="GO" id="GO:0051082">
    <property type="term" value="F:unfolded protein binding"/>
    <property type="evidence" value="ECO:0007669"/>
    <property type="project" value="TreeGrafter"/>
</dbReference>
<dbReference type="GO" id="GO:0051085">
    <property type="term" value="P:chaperone cofactor-dependent protein refolding"/>
    <property type="evidence" value="ECO:0007669"/>
    <property type="project" value="TreeGrafter"/>
</dbReference>
<dbReference type="CDD" id="cd00320">
    <property type="entry name" value="cpn10"/>
    <property type="match status" value="1"/>
</dbReference>
<dbReference type="FunFam" id="2.30.33.40:FF:000001">
    <property type="entry name" value="10 kDa chaperonin"/>
    <property type="match status" value="1"/>
</dbReference>
<dbReference type="Gene3D" id="2.30.33.40">
    <property type="entry name" value="GroES chaperonin"/>
    <property type="match status" value="1"/>
</dbReference>
<dbReference type="HAMAP" id="MF_00580">
    <property type="entry name" value="CH10"/>
    <property type="match status" value="1"/>
</dbReference>
<dbReference type="InterPro" id="IPR020818">
    <property type="entry name" value="Chaperonin_GroES"/>
</dbReference>
<dbReference type="InterPro" id="IPR037124">
    <property type="entry name" value="Chaperonin_GroES_sf"/>
</dbReference>
<dbReference type="InterPro" id="IPR018369">
    <property type="entry name" value="Chaprnonin_Cpn10_CS"/>
</dbReference>
<dbReference type="InterPro" id="IPR011032">
    <property type="entry name" value="GroES-like_sf"/>
</dbReference>
<dbReference type="NCBIfam" id="NF001531">
    <property type="entry name" value="PRK00364.2-2"/>
    <property type="match status" value="1"/>
</dbReference>
<dbReference type="NCBIfam" id="NF001533">
    <property type="entry name" value="PRK00364.2-4"/>
    <property type="match status" value="1"/>
</dbReference>
<dbReference type="PANTHER" id="PTHR10772">
    <property type="entry name" value="10 KDA HEAT SHOCK PROTEIN"/>
    <property type="match status" value="1"/>
</dbReference>
<dbReference type="PANTHER" id="PTHR10772:SF63">
    <property type="entry name" value="20 KDA CHAPERONIN, CHLOROPLASTIC"/>
    <property type="match status" value="1"/>
</dbReference>
<dbReference type="Pfam" id="PF00166">
    <property type="entry name" value="Cpn10"/>
    <property type="match status" value="1"/>
</dbReference>
<dbReference type="PRINTS" id="PR00297">
    <property type="entry name" value="CHAPERONIN10"/>
</dbReference>
<dbReference type="SMART" id="SM00883">
    <property type="entry name" value="Cpn10"/>
    <property type="match status" value="1"/>
</dbReference>
<dbReference type="SUPFAM" id="SSF50129">
    <property type="entry name" value="GroES-like"/>
    <property type="match status" value="1"/>
</dbReference>
<dbReference type="PROSITE" id="PS00681">
    <property type="entry name" value="CHAPERONINS_CPN10"/>
    <property type="match status" value="1"/>
</dbReference>
<comment type="function">
    <text evidence="1">Together with the chaperonin GroEL, plays an essential role in assisting protein folding. The GroEL-GroES system forms a nano-cage that allows encapsulation of the non-native substrate proteins and provides a physical environment optimized to promote and accelerate protein folding. GroES binds to the apical surface of the GroEL ring, thereby capping the opening of the GroEL channel.</text>
</comment>
<comment type="subunit">
    <text evidence="1">Heptamer of 7 subunits arranged in a ring. Interacts with the chaperonin GroEL.</text>
</comment>
<comment type="subcellular location">
    <subcellularLocation>
        <location evidence="1">Cytoplasm</location>
    </subcellularLocation>
</comment>
<comment type="similarity">
    <text evidence="1 2">Belongs to the GroES chaperonin family.</text>
</comment>
<sequence>MKYQPLYDRVLVEPIQNDEAHGKILIPDTAKEKPTEGIVVMVGGGYRNDKGDITPLKVKKGDTIVYTKWAGTEIKLESKDYVVIKESDILLVKS</sequence>
<organism>
    <name type="scientific">Orientia tsutsugamushi</name>
    <name type="common">Rickettsia tsutsugamushi</name>
    <dbReference type="NCBI Taxonomy" id="784"/>
    <lineage>
        <taxon>Bacteria</taxon>
        <taxon>Pseudomonadati</taxon>
        <taxon>Pseudomonadota</taxon>
        <taxon>Alphaproteobacteria</taxon>
        <taxon>Rickettsiales</taxon>
        <taxon>Rickettsiaceae</taxon>
        <taxon>Rickettsieae</taxon>
        <taxon>Orientia</taxon>
    </lineage>
</organism>